<evidence type="ECO:0000250" key="1"/>
<evidence type="ECO:0000250" key="2">
    <source>
        <dbReference type="UniProtKB" id="O94763"/>
    </source>
</evidence>
<evidence type="ECO:0000256" key="3">
    <source>
        <dbReference type="SAM" id="MobiDB-lite"/>
    </source>
</evidence>
<evidence type="ECO:0000269" key="4">
    <source>
    </source>
</evidence>
<evidence type="ECO:0000303" key="5">
    <source>
    </source>
</evidence>
<evidence type="ECO:0000303" key="6">
    <source>
    </source>
</evidence>
<evidence type="ECO:0000303" key="7">
    <source>
    </source>
</evidence>
<evidence type="ECO:0000305" key="8"/>
<gene>
    <name type="primary">Uri1</name>
    <name type="synonym">Nnx3</name>
    <name type="synonym">Ppp1r19</name>
    <name type="synonym">Rmp</name>
    <name type="synonym">Uri</name>
</gene>
<organism>
    <name type="scientific">Mus musculus</name>
    <name type="common">Mouse</name>
    <dbReference type="NCBI Taxonomy" id="10090"/>
    <lineage>
        <taxon>Eukaryota</taxon>
        <taxon>Metazoa</taxon>
        <taxon>Chordata</taxon>
        <taxon>Craniata</taxon>
        <taxon>Vertebrata</taxon>
        <taxon>Euteleostomi</taxon>
        <taxon>Mammalia</taxon>
        <taxon>Eutheria</taxon>
        <taxon>Euarchontoglires</taxon>
        <taxon>Glires</taxon>
        <taxon>Rodentia</taxon>
        <taxon>Myomorpha</taxon>
        <taxon>Muroidea</taxon>
        <taxon>Muridae</taxon>
        <taxon>Murinae</taxon>
        <taxon>Mus</taxon>
        <taxon>Mus</taxon>
    </lineage>
</organism>
<name>RMP_MOUSE</name>
<comment type="function">
    <text evidence="1">Involved in gene transcription regulation. Acts as a transcriptional repressor in concert with the corepressor UXT to regulate androgen receptor (AR) transcription. May act as a tumor suppressor to repress AR-mediated gene transcription and to inhibit anchorage-independent growth in prostate cancer cells. Required for cell survival in ovarian cancer cells. Together with UXT, associates with chromatin to the NKX3-1 promoter region (By similarity).</text>
</comment>
<comment type="function">
    <text evidence="1">Plays a central role in maintaining S6K1 signaling and BAD phosphorylation under normal growth conditions thereby protecting cells from potential deleterious effects of sustained S6K1 signaling. The URI1-PPP1CC complex acts as a central component of a negative feedback mechanism that counteracts excessive S6K1 survival signaling to BAD in response to growth factors. Mediates inhibition of PPP1CC phosphatase activity in mitochondria. Coordinates the regulation of nutrient-sensitive gene expression availability in a mTOR-dependent manner. Seems to be a scaffolding protein able to assemble a prefoldin-like complex that contains PFDs and proteins with roles in transcription and ubiquitination (By similarity).</text>
</comment>
<comment type="subunit">
    <text evidence="2">Homodimer. Component of the PAQosome complex which is responsible for the biogenesis of several protein complexes and which consists of R2TP complex members RUVBL1, RUVBL2, RPAP3 and PIH1D1, URI complex members PFDN2, PFDN6, PDRG1, UXT and URI1 as well as ASDURF, POLR2E and DNAAF10/WDR92. Interacts with POLR2E/RPB5, RUVBL2 and RUVBL1. Interacts with PFDN2, PFDN4 and STAP1; the interactions are phosphorylation-dependent and occur in a growth-dependent manner in the mitochondrion. Interacts with UXT. Interacts with PPP1CC; the interaction is phosphorylation-dependent and occurs in a growth factor-dependent manner. Interacts (via the middle C-terminal region) with GTF2F1 and GTF2F2. Interacts with DMAP1. Interacts with TSC1 and TSC2. Interacts with PRPF8 and EFTUD2 in a ZNHIT2-dependent manner.</text>
</comment>
<comment type="subcellular location">
    <subcellularLocation>
        <location evidence="4">Nucleus</location>
    </subcellularLocation>
    <subcellularLocation>
        <location evidence="4">Cytoplasm</location>
    </subcellularLocation>
    <subcellularLocation>
        <location evidence="4">Mitochondrion</location>
    </subcellularLocation>
    <subcellularLocation>
        <location evidence="1">Cell projection</location>
        <location evidence="1">Dendrite</location>
    </subcellularLocation>
    <text>Colocalizes with PFDN2, PFDN4, PPP1CC, RPS6KB1 and STAP1 in mitochondrion.</text>
</comment>
<comment type="alternative products">
    <event type="alternative splicing"/>
    <isoform>
        <id>Q3TLD5-1</id>
        <name>1</name>
        <sequence type="displayed"/>
    </isoform>
    <isoform>
        <id>Q3TLD5-2</id>
        <name>2</name>
        <sequence type="described" ref="VSP_032774"/>
    </isoform>
</comment>
<comment type="tissue specificity">
    <text evidence="4">Expressed in the spinal cord, ganglia, choroid plexus and olfactors epithelium of the developing brain. Expressed in skin, lung, kidney, testis and muscles (at protein level). Expressed strongly in brain and kidney. Expressed weakly in skeletal muscle, lung and liver.</text>
</comment>
<comment type="developmental stage">
    <text evidence="4">Expressed in embryo at 6 dpc, onward.</text>
</comment>
<comment type="PTM">
    <text evidence="1 4">Phosphorylation occurs in response to androgen treatment in prostate cancer cells in a mTOR-dependent manner. Phosphorylated; hyperhosphorylated in mitochondria in a mTORC-dependent signaling pathway. Phosphorylated at Ser-369 by RPS6KB1 in a growth factor- and rapamycin-dependent manner. S6K1-mediated mitochondrial phosphorylation at Ser-369 disrupts the URI1-PPP1CC complex in the mitochondrion, relieves PPP1CC phosphatase inhibition activity and hence engages a negative feedback diminishing RPS6KB1 kinase activity, preventing sustained S6K1-dependent signaling (By similarity). Phosphorylated. Phosphorylation occurs essentially on serine residues.</text>
</comment>
<comment type="similarity">
    <text evidence="8">Belongs to the RNA polymerase II subunit 5-mediating protein family.</text>
</comment>
<reference key="1">
    <citation type="journal article" date="1998" name="Genomics">
        <title>Molecular cloning of a gene on chromosome 19q12 coding for a novel intracellular protein: analysis of expression in human and mouse tissues and in human tumor cells, particularly Reed-Sternberg cells in Hodgkin disease.</title>
        <authorList>
            <person name="Van Leuven F."/>
            <person name="Torrekens S."/>
            <person name="Moechars D."/>
            <person name="Hilliker C."/>
            <person name="Buellens M."/>
            <person name="Bollen M."/>
            <person name="Delabie J."/>
        </authorList>
    </citation>
    <scope>NUCLEOTIDE SEQUENCE [MRNA] (ISOFORM 2)</scope>
    <scope>PHOSPHORYLATION</scope>
    <scope>SUBCELLULAR LOCATION</scope>
    <scope>DEVELOPMENTAL STAGE</scope>
    <scope>TISSUE SPECIFICITY</scope>
    <source>
        <tissue>Brain</tissue>
    </source>
</reference>
<reference key="2">
    <citation type="journal article" date="2005" name="Science">
        <title>The transcriptional landscape of the mammalian genome.</title>
        <authorList>
            <person name="Carninci P."/>
            <person name="Kasukawa T."/>
            <person name="Katayama S."/>
            <person name="Gough J."/>
            <person name="Frith M.C."/>
            <person name="Maeda N."/>
            <person name="Oyama R."/>
            <person name="Ravasi T."/>
            <person name="Lenhard B."/>
            <person name="Wells C."/>
            <person name="Kodzius R."/>
            <person name="Shimokawa K."/>
            <person name="Bajic V.B."/>
            <person name="Brenner S.E."/>
            <person name="Batalov S."/>
            <person name="Forrest A.R."/>
            <person name="Zavolan M."/>
            <person name="Davis M.J."/>
            <person name="Wilming L.G."/>
            <person name="Aidinis V."/>
            <person name="Allen J.E."/>
            <person name="Ambesi-Impiombato A."/>
            <person name="Apweiler R."/>
            <person name="Aturaliya R.N."/>
            <person name="Bailey T.L."/>
            <person name="Bansal M."/>
            <person name="Baxter L."/>
            <person name="Beisel K.W."/>
            <person name="Bersano T."/>
            <person name="Bono H."/>
            <person name="Chalk A.M."/>
            <person name="Chiu K.P."/>
            <person name="Choudhary V."/>
            <person name="Christoffels A."/>
            <person name="Clutterbuck D.R."/>
            <person name="Crowe M.L."/>
            <person name="Dalla E."/>
            <person name="Dalrymple B.P."/>
            <person name="de Bono B."/>
            <person name="Della Gatta G."/>
            <person name="di Bernardo D."/>
            <person name="Down T."/>
            <person name="Engstrom P."/>
            <person name="Fagiolini M."/>
            <person name="Faulkner G."/>
            <person name="Fletcher C.F."/>
            <person name="Fukushima T."/>
            <person name="Furuno M."/>
            <person name="Futaki S."/>
            <person name="Gariboldi M."/>
            <person name="Georgii-Hemming P."/>
            <person name="Gingeras T.R."/>
            <person name="Gojobori T."/>
            <person name="Green R.E."/>
            <person name="Gustincich S."/>
            <person name="Harbers M."/>
            <person name="Hayashi Y."/>
            <person name="Hensch T.K."/>
            <person name="Hirokawa N."/>
            <person name="Hill D."/>
            <person name="Huminiecki L."/>
            <person name="Iacono M."/>
            <person name="Ikeo K."/>
            <person name="Iwama A."/>
            <person name="Ishikawa T."/>
            <person name="Jakt M."/>
            <person name="Kanapin A."/>
            <person name="Katoh M."/>
            <person name="Kawasawa Y."/>
            <person name="Kelso J."/>
            <person name="Kitamura H."/>
            <person name="Kitano H."/>
            <person name="Kollias G."/>
            <person name="Krishnan S.P."/>
            <person name="Kruger A."/>
            <person name="Kummerfeld S.K."/>
            <person name="Kurochkin I.V."/>
            <person name="Lareau L.F."/>
            <person name="Lazarevic D."/>
            <person name="Lipovich L."/>
            <person name="Liu J."/>
            <person name="Liuni S."/>
            <person name="McWilliam S."/>
            <person name="Madan Babu M."/>
            <person name="Madera M."/>
            <person name="Marchionni L."/>
            <person name="Matsuda H."/>
            <person name="Matsuzawa S."/>
            <person name="Miki H."/>
            <person name="Mignone F."/>
            <person name="Miyake S."/>
            <person name="Morris K."/>
            <person name="Mottagui-Tabar S."/>
            <person name="Mulder N."/>
            <person name="Nakano N."/>
            <person name="Nakauchi H."/>
            <person name="Ng P."/>
            <person name="Nilsson R."/>
            <person name="Nishiguchi S."/>
            <person name="Nishikawa S."/>
            <person name="Nori F."/>
            <person name="Ohara O."/>
            <person name="Okazaki Y."/>
            <person name="Orlando V."/>
            <person name="Pang K.C."/>
            <person name="Pavan W.J."/>
            <person name="Pavesi G."/>
            <person name="Pesole G."/>
            <person name="Petrovsky N."/>
            <person name="Piazza S."/>
            <person name="Reed J."/>
            <person name="Reid J.F."/>
            <person name="Ring B.Z."/>
            <person name="Ringwald M."/>
            <person name="Rost B."/>
            <person name="Ruan Y."/>
            <person name="Salzberg S.L."/>
            <person name="Sandelin A."/>
            <person name="Schneider C."/>
            <person name="Schoenbach C."/>
            <person name="Sekiguchi K."/>
            <person name="Semple C.A."/>
            <person name="Seno S."/>
            <person name="Sessa L."/>
            <person name="Sheng Y."/>
            <person name="Shibata Y."/>
            <person name="Shimada H."/>
            <person name="Shimada K."/>
            <person name="Silva D."/>
            <person name="Sinclair B."/>
            <person name="Sperling S."/>
            <person name="Stupka E."/>
            <person name="Sugiura K."/>
            <person name="Sultana R."/>
            <person name="Takenaka Y."/>
            <person name="Taki K."/>
            <person name="Tammoja K."/>
            <person name="Tan S.L."/>
            <person name="Tang S."/>
            <person name="Taylor M.S."/>
            <person name="Tegner J."/>
            <person name="Teichmann S.A."/>
            <person name="Ueda H.R."/>
            <person name="van Nimwegen E."/>
            <person name="Verardo R."/>
            <person name="Wei C.L."/>
            <person name="Yagi K."/>
            <person name="Yamanishi H."/>
            <person name="Zabarovsky E."/>
            <person name="Zhu S."/>
            <person name="Zimmer A."/>
            <person name="Hide W."/>
            <person name="Bult C."/>
            <person name="Grimmond S.M."/>
            <person name="Teasdale R.D."/>
            <person name="Liu E.T."/>
            <person name="Brusic V."/>
            <person name="Quackenbush J."/>
            <person name="Wahlestedt C."/>
            <person name="Mattick J.S."/>
            <person name="Hume D.A."/>
            <person name="Kai C."/>
            <person name="Sasaki D."/>
            <person name="Tomaru Y."/>
            <person name="Fukuda S."/>
            <person name="Kanamori-Katayama M."/>
            <person name="Suzuki M."/>
            <person name="Aoki J."/>
            <person name="Arakawa T."/>
            <person name="Iida J."/>
            <person name="Imamura K."/>
            <person name="Itoh M."/>
            <person name="Kato T."/>
            <person name="Kawaji H."/>
            <person name="Kawagashira N."/>
            <person name="Kawashima T."/>
            <person name="Kojima M."/>
            <person name="Kondo S."/>
            <person name="Konno H."/>
            <person name="Nakano K."/>
            <person name="Ninomiya N."/>
            <person name="Nishio T."/>
            <person name="Okada M."/>
            <person name="Plessy C."/>
            <person name="Shibata K."/>
            <person name="Shiraki T."/>
            <person name="Suzuki S."/>
            <person name="Tagami M."/>
            <person name="Waki K."/>
            <person name="Watahiki A."/>
            <person name="Okamura-Oho Y."/>
            <person name="Suzuki H."/>
            <person name="Kawai J."/>
            <person name="Hayashizaki Y."/>
        </authorList>
    </citation>
    <scope>NUCLEOTIDE SEQUENCE [LARGE SCALE MRNA] (ISOFORMS 1 AND 2)</scope>
    <source>
        <strain>C57BL/6J</strain>
        <tissue>Testis</tissue>
    </source>
</reference>
<reference key="3">
    <citation type="journal article" date="2004" name="Genome Res.">
        <title>The status, quality, and expansion of the NIH full-length cDNA project: the Mammalian Gene Collection (MGC).</title>
        <authorList>
            <consortium name="The MGC Project Team"/>
        </authorList>
    </citation>
    <scope>NUCLEOTIDE SEQUENCE [LARGE SCALE MRNA] (ISOFORM 2)</scope>
    <source>
        <strain>FVB/N-3</strain>
        <tissue>Mammary tumor</tissue>
    </source>
</reference>
<reference key="4">
    <citation type="journal article" date="2007" name="Proc. Natl. Acad. Sci. U.S.A.">
        <title>Large-scale phosphorylation analysis of mouse liver.</title>
        <authorList>
            <person name="Villen J."/>
            <person name="Beausoleil S.A."/>
            <person name="Gerber S.A."/>
            <person name="Gygi S.P."/>
        </authorList>
    </citation>
    <scope>IDENTIFICATION BY MASS SPECTROMETRY [LARGE SCALE ANALYSIS]</scope>
    <source>
        <tissue>Liver</tissue>
    </source>
</reference>
<reference key="5">
    <citation type="journal article" date="2009" name="Immunity">
        <title>The phagosomal proteome in interferon-gamma-activated macrophages.</title>
        <authorList>
            <person name="Trost M."/>
            <person name="English L."/>
            <person name="Lemieux S."/>
            <person name="Courcelles M."/>
            <person name="Desjardins M."/>
            <person name="Thibault P."/>
        </authorList>
    </citation>
    <scope>IDENTIFICATION BY MASS SPECTROMETRY [LARGE SCALE ANALYSIS]</scope>
</reference>
<reference key="6">
    <citation type="journal article" date="2010" name="Cell">
        <title>A tissue-specific atlas of mouse protein phosphorylation and expression.</title>
        <authorList>
            <person name="Huttlin E.L."/>
            <person name="Jedrychowski M.P."/>
            <person name="Elias J.E."/>
            <person name="Goswami T."/>
            <person name="Rad R."/>
            <person name="Beausoleil S.A."/>
            <person name="Villen J."/>
            <person name="Haas W."/>
            <person name="Sowa M.E."/>
            <person name="Gygi S.P."/>
        </authorList>
    </citation>
    <scope>IDENTIFICATION BY MASS SPECTROMETRY [LARGE SCALE ANALYSIS]</scope>
    <source>
        <tissue>Heart</tissue>
    </source>
</reference>
<feature type="chain" id="PRO_0000328753" description="Unconventional prefoldin RPB5 interactor">
    <location>
        <begin position="1"/>
        <end position="531"/>
    </location>
</feature>
<feature type="region of interest" description="Disordered" evidence="3">
    <location>
        <begin position="1"/>
        <end position="24"/>
    </location>
</feature>
<feature type="region of interest" description="Disordered" evidence="3">
    <location>
        <begin position="224"/>
        <end position="381"/>
    </location>
</feature>
<feature type="region of interest" description="Disordered" evidence="3">
    <location>
        <begin position="408"/>
        <end position="470"/>
    </location>
</feature>
<feature type="region of interest" description="Disordered" evidence="3">
    <location>
        <begin position="500"/>
        <end position="531"/>
    </location>
</feature>
<feature type="compositionally biased region" description="Low complexity" evidence="3">
    <location>
        <begin position="13"/>
        <end position="24"/>
    </location>
</feature>
<feature type="compositionally biased region" description="Polar residues" evidence="3">
    <location>
        <begin position="257"/>
        <end position="266"/>
    </location>
</feature>
<feature type="compositionally biased region" description="Polar residues" evidence="3">
    <location>
        <begin position="280"/>
        <end position="296"/>
    </location>
</feature>
<feature type="compositionally biased region" description="Acidic residues" evidence="3">
    <location>
        <begin position="300"/>
        <end position="319"/>
    </location>
</feature>
<feature type="compositionally biased region" description="Polar residues" evidence="3">
    <location>
        <begin position="414"/>
        <end position="424"/>
    </location>
</feature>
<feature type="modified residue" description="N-acetylmethionine" evidence="2">
    <location>
        <position position="1"/>
    </location>
</feature>
<feature type="modified residue" description="Phosphoserine; by RPS6KB1" evidence="1">
    <location>
        <position position="369"/>
    </location>
</feature>
<feature type="modified residue" description="Phosphoserine" evidence="2">
    <location>
        <position position="439"/>
    </location>
</feature>
<feature type="splice variant" id="VSP_032774" description="In isoform 2." evidence="5 6 7">
    <location>
        <begin position="1"/>
        <end position="74"/>
    </location>
</feature>
<feature type="sequence conflict" description="In Ref. 1; BAE38857." evidence="8" ref="1">
    <original>T</original>
    <variation>A</variation>
    <location>
        <position position="143"/>
    </location>
</feature>
<feature type="sequence conflict" description="In Ref. 3; AAH23029." evidence="8" ref="3">
    <original>N</original>
    <variation>D</variation>
    <location>
        <position position="201"/>
    </location>
</feature>
<feature type="sequence conflict" description="In Ref. 3; AAH23029." evidence="8" ref="3">
    <original>E</original>
    <variation>D</variation>
    <location>
        <position position="306"/>
    </location>
</feature>
<feature type="sequence conflict" description="In Ref. 1; AAD08680." evidence="8" ref="1">
    <original>D</original>
    <variation>E</variation>
    <location>
        <position position="387"/>
    </location>
</feature>
<feature type="sequence conflict" description="In Ref. 3; AAH23029." evidence="8" ref="3">
    <original>R</original>
    <variation>H</variation>
    <location>
        <position position="403"/>
    </location>
</feature>
<sequence length="531" mass="59084">MEPPSEPEPEPQPLAEASAAAPLRAPEVARLREEQEKVVTNCQEKIQHWEKVDNDYSALQERLRTLPDKLSYDVMVPFGPLAFMPGKLVHTNEVTVLLGDNWFAKCSAKQAVGLVEHRKEHVRKTIDDFKKVLKNFESRVEFTEDLQKMSDAAGDFVDIREEIKSDFEFKGKQRIAHKPHSKPKTSDIFEADFENGVKPKNTFDADELWARLEELERQEELLGELESKPDTVIANGEDRVSSEEEKEGADTGVNVVSPVTDSSAASSCKRRAGNAGLPNGQVNSLNYSVNGSNSYHSNKDDDEEEEDDDDDDDEDDDNESDHAISADNSIPTIYFSHTVEPKRVRINTGKNTTLKFSEKKEEAKRKRKSGAGSHATHELPAIKSPADIYRVFVDVVNGEYVPRKSILKSRSRENSVCSDTSESSAADVEDRRGLLRSTSSEEAVATEAGGSSLDELQENHPKKPLPSGVSEAFSGTVIEKEFLSPSLAPYSAIAHHALPTIPERKEVPSEVSEEPTKRVSKFRAARLQQRS</sequence>
<accession>Q3TLD5</accession>
<accession>Q3V078</accession>
<accession>Q8R5C4</accession>
<accession>Q9Z243</accession>
<dbReference type="EMBL" id="AF091096">
    <property type="protein sequence ID" value="AAD08680.1"/>
    <property type="molecule type" value="mRNA"/>
</dbReference>
<dbReference type="EMBL" id="AK133383">
    <property type="protein sequence ID" value="BAE21626.1"/>
    <property type="molecule type" value="mRNA"/>
</dbReference>
<dbReference type="EMBL" id="AK166566">
    <property type="protein sequence ID" value="BAE38857.1"/>
    <property type="molecule type" value="mRNA"/>
</dbReference>
<dbReference type="EMBL" id="BC023029">
    <property type="protein sequence ID" value="AAH23029.1"/>
    <property type="molecule type" value="mRNA"/>
</dbReference>
<dbReference type="CCDS" id="CCDS21157.1">
    <molecule id="Q3TLD5-1"/>
</dbReference>
<dbReference type="RefSeq" id="NP_001404130.1">
    <molecule id="Q3TLD5-2"/>
    <property type="nucleotide sequence ID" value="NM_001417201.1"/>
</dbReference>
<dbReference type="RefSeq" id="NP_001404131.1">
    <molecule id="Q3TLD5-2"/>
    <property type="nucleotide sequence ID" value="NM_001417202.1"/>
</dbReference>
<dbReference type="RefSeq" id="NP_035404.4">
    <molecule id="Q3TLD5-1"/>
    <property type="nucleotide sequence ID" value="NM_011274.5"/>
</dbReference>
<dbReference type="RefSeq" id="XP_006539741.1">
    <property type="nucleotide sequence ID" value="XM_006539678.3"/>
</dbReference>
<dbReference type="SMR" id="Q3TLD5"/>
<dbReference type="BioGRID" id="202902">
    <property type="interactions" value="7"/>
</dbReference>
<dbReference type="FunCoup" id="Q3TLD5">
    <property type="interactions" value="3658"/>
</dbReference>
<dbReference type="IntAct" id="Q3TLD5">
    <property type="interactions" value="2"/>
</dbReference>
<dbReference type="MINT" id="Q3TLD5"/>
<dbReference type="STRING" id="10090.ENSMUSP00000082646"/>
<dbReference type="iPTMnet" id="Q3TLD5"/>
<dbReference type="PhosphoSitePlus" id="Q3TLD5"/>
<dbReference type="jPOST" id="Q3TLD5"/>
<dbReference type="PaxDb" id="10090-ENSMUSP00000082646"/>
<dbReference type="PeptideAtlas" id="Q3TLD5"/>
<dbReference type="ProteomicsDB" id="300410">
    <molecule id="Q3TLD5-1"/>
</dbReference>
<dbReference type="ProteomicsDB" id="300411">
    <molecule id="Q3TLD5-2"/>
</dbReference>
<dbReference type="Pumba" id="Q3TLD5"/>
<dbReference type="Antibodypedia" id="28848">
    <property type="antibodies" value="226 antibodies from 33 providers"/>
</dbReference>
<dbReference type="DNASU" id="19777"/>
<dbReference type="Ensembl" id="ENSMUST00000085513.6">
    <molecule id="Q3TLD5-1"/>
    <property type="protein sequence ID" value="ENSMUSP00000082646.5"/>
    <property type="gene ID" value="ENSMUSG00000030421.10"/>
</dbReference>
<dbReference type="GeneID" id="19777"/>
<dbReference type="KEGG" id="mmu:19777"/>
<dbReference type="UCSC" id="uc009gkp.2">
    <molecule id="Q3TLD5-1"/>
    <property type="organism name" value="mouse"/>
</dbReference>
<dbReference type="AGR" id="MGI:1342294"/>
<dbReference type="CTD" id="8725"/>
<dbReference type="MGI" id="MGI:1342294">
    <property type="gene designation" value="Uri1"/>
</dbReference>
<dbReference type="VEuPathDB" id="HostDB:ENSMUSG00000030421"/>
<dbReference type="eggNOG" id="KOG3130">
    <property type="taxonomic scope" value="Eukaryota"/>
</dbReference>
<dbReference type="GeneTree" id="ENSGT00390000002362"/>
<dbReference type="HOGENOM" id="CLU_029262_0_0_1"/>
<dbReference type="InParanoid" id="Q3TLD5"/>
<dbReference type="OMA" id="HWKKVDD"/>
<dbReference type="OrthoDB" id="21413at2759"/>
<dbReference type="PhylomeDB" id="Q3TLD5"/>
<dbReference type="TreeFam" id="TF332816"/>
<dbReference type="BioGRID-ORCS" id="19777">
    <property type="hits" value="26 hits in 80 CRISPR screens"/>
</dbReference>
<dbReference type="ChiTaRS" id="Uri1">
    <property type="organism name" value="mouse"/>
</dbReference>
<dbReference type="PRO" id="PR:Q3TLD5"/>
<dbReference type="Proteomes" id="UP000000589">
    <property type="component" value="Chromosome 7"/>
</dbReference>
<dbReference type="RNAct" id="Q3TLD5">
    <property type="molecule type" value="protein"/>
</dbReference>
<dbReference type="Bgee" id="ENSMUSG00000030421">
    <property type="expression patterns" value="Expressed in optic fissure and 257 other cell types or tissues"/>
</dbReference>
<dbReference type="ExpressionAtlas" id="Q3TLD5">
    <property type="expression patterns" value="baseline and differential"/>
</dbReference>
<dbReference type="GO" id="GO:0005737">
    <property type="term" value="C:cytoplasm"/>
    <property type="evidence" value="ECO:0000250"/>
    <property type="project" value="UniProtKB"/>
</dbReference>
<dbReference type="GO" id="GO:0005829">
    <property type="term" value="C:cytosol"/>
    <property type="evidence" value="ECO:0007669"/>
    <property type="project" value="Ensembl"/>
</dbReference>
<dbReference type="GO" id="GO:0030425">
    <property type="term" value="C:dendrite"/>
    <property type="evidence" value="ECO:0007669"/>
    <property type="project" value="UniProtKB-SubCell"/>
</dbReference>
<dbReference type="GO" id="GO:0005739">
    <property type="term" value="C:mitochondrion"/>
    <property type="evidence" value="ECO:0007669"/>
    <property type="project" value="UniProtKB-SubCell"/>
</dbReference>
<dbReference type="GO" id="GO:0005654">
    <property type="term" value="C:nucleoplasm"/>
    <property type="evidence" value="ECO:0007669"/>
    <property type="project" value="Ensembl"/>
</dbReference>
<dbReference type="GO" id="GO:0005634">
    <property type="term" value="C:nucleus"/>
    <property type="evidence" value="ECO:0000250"/>
    <property type="project" value="UniProtKB"/>
</dbReference>
<dbReference type="GO" id="GO:1990062">
    <property type="term" value="C:RPAP3/R2TP/prefoldin-like complex"/>
    <property type="evidence" value="ECO:0007669"/>
    <property type="project" value="Ensembl"/>
</dbReference>
<dbReference type="GO" id="GO:0003682">
    <property type="term" value="F:chromatin binding"/>
    <property type="evidence" value="ECO:0000250"/>
    <property type="project" value="UniProtKB"/>
</dbReference>
<dbReference type="GO" id="GO:0051219">
    <property type="term" value="F:phosphoprotein binding"/>
    <property type="evidence" value="ECO:0007669"/>
    <property type="project" value="Ensembl"/>
</dbReference>
<dbReference type="GO" id="GO:0004864">
    <property type="term" value="F:protein phosphatase inhibitor activity"/>
    <property type="evidence" value="ECO:0007669"/>
    <property type="project" value="UniProtKB-KW"/>
</dbReference>
<dbReference type="GO" id="GO:0000993">
    <property type="term" value="F:RNA polymerase II complex binding"/>
    <property type="evidence" value="ECO:0007669"/>
    <property type="project" value="Ensembl"/>
</dbReference>
<dbReference type="GO" id="GO:0003714">
    <property type="term" value="F:transcription corepressor activity"/>
    <property type="evidence" value="ECO:0000250"/>
    <property type="project" value="UniProtKB"/>
</dbReference>
<dbReference type="GO" id="GO:0071363">
    <property type="term" value="P:cellular response to growth factor stimulus"/>
    <property type="evidence" value="ECO:0000250"/>
    <property type="project" value="UniProtKB"/>
</dbReference>
<dbReference type="GO" id="GO:0071383">
    <property type="term" value="P:cellular response to steroid hormone stimulus"/>
    <property type="evidence" value="ECO:0000250"/>
    <property type="project" value="UniProtKB"/>
</dbReference>
<dbReference type="GO" id="GO:2001243">
    <property type="term" value="P:negative regulation of intrinsic apoptotic signaling pathway"/>
    <property type="evidence" value="ECO:0000250"/>
    <property type="project" value="UniProtKB"/>
</dbReference>
<dbReference type="GO" id="GO:0010923">
    <property type="term" value="P:negative regulation of phosphatase activity"/>
    <property type="evidence" value="ECO:0000250"/>
    <property type="project" value="UniProtKB"/>
</dbReference>
<dbReference type="GO" id="GO:0000122">
    <property type="term" value="P:negative regulation of transcription by RNA polymerase II"/>
    <property type="evidence" value="ECO:0000250"/>
    <property type="project" value="UniProtKB"/>
</dbReference>
<dbReference type="GO" id="GO:0001558">
    <property type="term" value="P:regulation of cell growth"/>
    <property type="evidence" value="ECO:0000250"/>
    <property type="project" value="UniProtKB"/>
</dbReference>
<dbReference type="GO" id="GO:0009615">
    <property type="term" value="P:response to virus"/>
    <property type="evidence" value="ECO:0007669"/>
    <property type="project" value="Ensembl"/>
</dbReference>
<dbReference type="CDD" id="cd23159">
    <property type="entry name" value="Prefoldin_URI1"/>
    <property type="match status" value="1"/>
</dbReference>
<dbReference type="FunFam" id="1.10.287.370:FF:000008">
    <property type="entry name" value="unconventional prefoldin RPB5 interactor 1"/>
    <property type="match status" value="1"/>
</dbReference>
<dbReference type="Gene3D" id="1.10.287.370">
    <property type="match status" value="1"/>
</dbReference>
<dbReference type="InterPro" id="IPR009053">
    <property type="entry name" value="Prefoldin"/>
</dbReference>
<dbReference type="InterPro" id="IPR004127">
    <property type="entry name" value="Prefoldin_subunit_alpha"/>
</dbReference>
<dbReference type="InterPro" id="IPR052255">
    <property type="entry name" value="RNA_pol_II_subunit5-mediator"/>
</dbReference>
<dbReference type="PANTHER" id="PTHR15111">
    <property type="entry name" value="RNA POLYMERASE II SUBUNIT 5-MEDIATING PROTEIN NNX3"/>
    <property type="match status" value="1"/>
</dbReference>
<dbReference type="PANTHER" id="PTHR15111:SF0">
    <property type="entry name" value="UNCONVENTIONAL PREFOLDIN RPB5 INTERACTOR 1"/>
    <property type="match status" value="1"/>
</dbReference>
<dbReference type="Pfam" id="PF02996">
    <property type="entry name" value="Prefoldin"/>
    <property type="match status" value="1"/>
</dbReference>
<dbReference type="SUPFAM" id="SSF46579">
    <property type="entry name" value="Prefoldin"/>
    <property type="match status" value="1"/>
</dbReference>
<protein>
    <recommendedName>
        <fullName>Unconventional prefoldin RPB5 interactor</fullName>
    </recommendedName>
    <alternativeName>
        <fullName>Protein NNX3</fullName>
    </alternativeName>
    <alternativeName>
        <fullName>Protein phosphatase 1 regulatory subunit 19</fullName>
    </alternativeName>
    <alternativeName>
        <fullName>RNA polymerase II subunit 5-mediating protein</fullName>
        <shortName>RPB5-mediating protein</shortName>
    </alternativeName>
</protein>
<proteinExistence type="evidence at protein level"/>
<keyword id="KW-0007">Acetylation</keyword>
<keyword id="KW-0025">Alternative splicing</keyword>
<keyword id="KW-0966">Cell projection</keyword>
<keyword id="KW-0963">Cytoplasm</keyword>
<keyword id="KW-0496">Mitochondrion</keyword>
<keyword id="KW-0539">Nucleus</keyword>
<keyword id="KW-0553">Oncogene</keyword>
<keyword id="KW-0597">Phosphoprotein</keyword>
<keyword id="KW-0650">Protein phosphatase inhibitor</keyword>
<keyword id="KW-1185">Reference proteome</keyword>
<keyword id="KW-0678">Repressor</keyword>
<keyword id="KW-0804">Transcription</keyword>
<keyword id="KW-0805">Transcription regulation</keyword>